<comment type="subunit">
    <text evidence="1">Component of the mitochondrial small ribosomal subunit (mt-SSU). Mature mammalian 55S mitochondrial ribosomes consist of a small (28S) and a large (39S) subunit. The 28S small subunit contains a 12S ribosomal RNA (12S mt-rRNA) and 30 different proteins. The 39S large subunit contains a 16S rRNA (16S mt-rRNA), a copy of mitochondrial valine transfer RNA (mt-tRNA(Val)), which plays an integral structural role, and 52 different proteins.</text>
</comment>
<comment type="interaction">
    <interactant intactId="EBI-716172">
        <id>P82932</id>
    </interactant>
    <interactant intactId="EBI-739832">
        <id>Q8TBB1</id>
        <label>LNX1</label>
    </interactant>
    <organismsDiffer>false</organismsDiffer>
    <experiments>3</experiments>
</comment>
<comment type="interaction">
    <interactant intactId="EBI-716172">
        <id>P82932</id>
    </interactant>
    <interactant intactId="EBI-2340269">
        <id>Q13064</id>
        <label>MKRN3</label>
    </interactant>
    <organismsDiffer>false</organismsDiffer>
    <experiments>3</experiments>
</comment>
<comment type="interaction">
    <interactant intactId="EBI-716172">
        <id>P82932</id>
    </interactant>
    <interactant intactId="EBI-1186119">
        <id>P51692</id>
        <label>STAT5B</label>
    </interactant>
    <organismsDiffer>false</organismsDiffer>
    <experiments>4</experiments>
</comment>
<comment type="interaction">
    <interactant intactId="EBI-716172">
        <id>P82932</id>
    </interactant>
    <interactant intactId="EBI-9676218">
        <id>P03410</id>
        <label>tax</label>
    </interactant>
    <organismsDiffer>true</organismsDiffer>
    <experiments>3</experiments>
</comment>
<comment type="interaction">
    <interactant intactId="EBI-716172">
        <id>P82932</id>
    </interactant>
    <interactant intactId="EBI-9675698">
        <id>P14079</id>
        <label>tax</label>
    </interactant>
    <organismsDiffer>true</organismsDiffer>
    <experiments>3</experiments>
</comment>
<comment type="subcellular location">
    <subcellularLocation>
        <location evidence="1">Mitochondrion</location>
    </subcellularLocation>
</comment>
<comment type="similarity">
    <text evidence="3">Belongs to the bacterial ribosomal protein bS6 family.</text>
</comment>
<comment type="sequence caution" evidence="3">
    <conflict type="erroneous initiation">
        <sequence resource="EMBL-CDS" id="BAB40995"/>
    </conflict>
</comment>
<protein>
    <recommendedName>
        <fullName evidence="2">Small ribosomal subunit protein bS6m</fullName>
    </recommendedName>
    <alternativeName>
        <fullName>28S ribosomal protein S6, mitochondrial</fullName>
        <shortName>MRP-S6</shortName>
        <shortName>S6mt</shortName>
    </alternativeName>
</protein>
<proteinExistence type="evidence at protein level"/>
<feature type="chain" id="PRO_0000176892" description="Small ribosomal subunit protein bS6m">
    <location>
        <begin position="1"/>
        <end position="125"/>
    </location>
</feature>
<feature type="strand" evidence="5">
    <location>
        <begin position="3"/>
        <end position="11"/>
    </location>
</feature>
<feature type="helix" evidence="5">
    <location>
        <begin position="15"/>
        <end position="31"/>
    </location>
</feature>
<feature type="strand" evidence="5">
    <location>
        <begin position="35"/>
        <end position="53"/>
    </location>
</feature>
<feature type="strand" evidence="5">
    <location>
        <begin position="56"/>
        <end position="69"/>
    </location>
</feature>
<feature type="helix" evidence="5">
    <location>
        <begin position="74"/>
        <end position="84"/>
    </location>
</feature>
<feature type="strand" evidence="5">
    <location>
        <begin position="88"/>
        <end position="95"/>
    </location>
</feature>
<feature type="turn" evidence="5">
    <location>
        <begin position="97"/>
        <end position="99"/>
    </location>
</feature>
<feature type="helix" evidence="6">
    <location>
        <begin position="113"/>
        <end position="118"/>
    </location>
</feature>
<name>RT06_HUMAN</name>
<keyword id="KW-0002">3D-structure</keyword>
<keyword id="KW-0496">Mitochondrion</keyword>
<keyword id="KW-1267">Proteomics identification</keyword>
<keyword id="KW-1185">Reference proteome</keyword>
<keyword id="KW-0687">Ribonucleoprotein</keyword>
<keyword id="KW-0689">Ribosomal protein</keyword>
<accession>P82932</accession>
<accession>B2R573</accession>
<accession>Q96Q64</accession>
<accession>Q9BSK8</accession>
<accession>Q9BW89</accession>
<gene>
    <name type="primary">MRPS6</name>
    <name type="synonym">C21orf101</name>
    <name type="synonym">RPMS6</name>
</gene>
<sequence>MPRYELALILKAMQRPETAATLKRTIEALMDRGAIVRDLENLGERALPYRISAHSQQHNRGGYFLVDFYAPTAAVESMVEHLSRDIDVIRGNIVKHPLTQELKECEGIVPVPLAEKLYSTKKRKK</sequence>
<evidence type="ECO:0000269" key="1">
    <source>
    </source>
</evidence>
<evidence type="ECO:0000303" key="2">
    <source>
    </source>
</evidence>
<evidence type="ECO:0000305" key="3"/>
<evidence type="ECO:0007744" key="4">
    <source>
        <dbReference type="PDB" id="3J9M"/>
    </source>
</evidence>
<evidence type="ECO:0007829" key="5">
    <source>
        <dbReference type="PDB" id="8CSS"/>
    </source>
</evidence>
<evidence type="ECO:0007829" key="6">
    <source>
        <dbReference type="PDB" id="8QRL"/>
    </source>
</evidence>
<organism>
    <name type="scientific">Homo sapiens</name>
    <name type="common">Human</name>
    <dbReference type="NCBI Taxonomy" id="9606"/>
    <lineage>
        <taxon>Eukaryota</taxon>
        <taxon>Metazoa</taxon>
        <taxon>Chordata</taxon>
        <taxon>Craniata</taxon>
        <taxon>Vertebrata</taxon>
        <taxon>Euteleostomi</taxon>
        <taxon>Mammalia</taxon>
        <taxon>Eutheria</taxon>
        <taxon>Euarchontoglires</taxon>
        <taxon>Primates</taxon>
        <taxon>Haplorrhini</taxon>
        <taxon>Catarrhini</taxon>
        <taxon>Hominidae</taxon>
        <taxon>Homo</taxon>
    </lineage>
</organism>
<dbReference type="EMBL" id="AB049942">
    <property type="protein sequence ID" value="BAB40995.1"/>
    <property type="status" value="ALT_INIT"/>
    <property type="molecule type" value="mRNA"/>
</dbReference>
<dbReference type="EMBL" id="AY061855">
    <property type="protein sequence ID" value="AAL35739.1"/>
    <property type="molecule type" value="mRNA"/>
</dbReference>
<dbReference type="EMBL" id="AK312084">
    <property type="protein sequence ID" value="BAG35020.1"/>
    <property type="molecule type" value="mRNA"/>
</dbReference>
<dbReference type="EMBL" id="AP001719">
    <property type="status" value="NOT_ANNOTATED_CDS"/>
    <property type="molecule type" value="Genomic_DNA"/>
</dbReference>
<dbReference type="EMBL" id="CH471079">
    <property type="protein sequence ID" value="EAX09798.1"/>
    <property type="molecule type" value="Genomic_DNA"/>
</dbReference>
<dbReference type="EMBL" id="BC000547">
    <property type="protein sequence ID" value="AAH00547.2"/>
    <property type="molecule type" value="mRNA"/>
</dbReference>
<dbReference type="EMBL" id="BC004976">
    <property type="protein sequence ID" value="AAH04976.2"/>
    <property type="molecule type" value="mRNA"/>
</dbReference>
<dbReference type="EMBL" id="BC010076">
    <property type="protein sequence ID" value="AAH10076.1"/>
    <property type="molecule type" value="mRNA"/>
</dbReference>
<dbReference type="EMBL" id="BC051302">
    <property type="protein sequence ID" value="AAH51302.1"/>
    <property type="molecule type" value="mRNA"/>
</dbReference>
<dbReference type="EMBL" id="AB051347">
    <property type="protein sequence ID" value="BAB54937.1"/>
    <property type="molecule type" value="Genomic_DNA"/>
</dbReference>
<dbReference type="CCDS" id="CCDS33548.1"/>
<dbReference type="RefSeq" id="NP_115865.1">
    <property type="nucleotide sequence ID" value="NM_032476.4"/>
</dbReference>
<dbReference type="PDB" id="3J9M">
    <property type="method" value="EM"/>
    <property type="resolution" value="3.50 A"/>
    <property type="chains" value="AE=1-125"/>
</dbReference>
<dbReference type="PDB" id="6NU2">
    <property type="method" value="EM"/>
    <property type="resolution" value="3.90 A"/>
    <property type="chains" value="AE=2-123"/>
</dbReference>
<dbReference type="PDB" id="6NU3">
    <property type="method" value="EM"/>
    <property type="resolution" value="4.40 A"/>
    <property type="chains" value="AE=1-125"/>
</dbReference>
<dbReference type="PDB" id="6RW4">
    <property type="method" value="EM"/>
    <property type="resolution" value="2.97 A"/>
    <property type="chains" value="E=1-125"/>
</dbReference>
<dbReference type="PDB" id="6RW5">
    <property type="method" value="EM"/>
    <property type="resolution" value="3.14 A"/>
    <property type="chains" value="E=1-125"/>
</dbReference>
<dbReference type="PDB" id="6VLZ">
    <property type="method" value="EM"/>
    <property type="resolution" value="2.97 A"/>
    <property type="chains" value="AE=1-125"/>
</dbReference>
<dbReference type="PDB" id="6VMI">
    <property type="method" value="EM"/>
    <property type="resolution" value="2.96 A"/>
    <property type="chains" value="AE=1-125"/>
</dbReference>
<dbReference type="PDB" id="6ZM5">
    <property type="method" value="EM"/>
    <property type="resolution" value="2.89 A"/>
    <property type="chains" value="AE=1-125"/>
</dbReference>
<dbReference type="PDB" id="6ZM6">
    <property type="method" value="EM"/>
    <property type="resolution" value="2.59 A"/>
    <property type="chains" value="AE=1-125"/>
</dbReference>
<dbReference type="PDB" id="6ZS9">
    <property type="method" value="EM"/>
    <property type="resolution" value="4.00 A"/>
    <property type="chains" value="AE=1-125"/>
</dbReference>
<dbReference type="PDB" id="6ZSA">
    <property type="method" value="EM"/>
    <property type="resolution" value="4.00 A"/>
    <property type="chains" value="AE=1-125"/>
</dbReference>
<dbReference type="PDB" id="6ZSB">
    <property type="method" value="EM"/>
    <property type="resolution" value="4.50 A"/>
    <property type="chains" value="AE=1-125"/>
</dbReference>
<dbReference type="PDB" id="6ZSC">
    <property type="method" value="EM"/>
    <property type="resolution" value="3.50 A"/>
    <property type="chains" value="AE=1-125"/>
</dbReference>
<dbReference type="PDB" id="6ZSD">
    <property type="method" value="EM"/>
    <property type="resolution" value="3.70 A"/>
    <property type="chains" value="AE=1-125"/>
</dbReference>
<dbReference type="PDB" id="6ZSE">
    <property type="method" value="EM"/>
    <property type="resolution" value="5.00 A"/>
    <property type="chains" value="AE=1-125"/>
</dbReference>
<dbReference type="PDB" id="6ZSG">
    <property type="method" value="EM"/>
    <property type="resolution" value="4.00 A"/>
    <property type="chains" value="AE=1-125"/>
</dbReference>
<dbReference type="PDB" id="7A5F">
    <property type="method" value="EM"/>
    <property type="resolution" value="4.40 A"/>
    <property type="chains" value="E6=1-125"/>
</dbReference>
<dbReference type="PDB" id="7A5G">
    <property type="method" value="EM"/>
    <property type="resolution" value="4.33 A"/>
    <property type="chains" value="E6=1-125"/>
</dbReference>
<dbReference type="PDB" id="7A5I">
    <property type="method" value="EM"/>
    <property type="resolution" value="3.70 A"/>
    <property type="chains" value="E6=1-125"/>
</dbReference>
<dbReference type="PDB" id="7A5K">
    <property type="method" value="EM"/>
    <property type="resolution" value="3.70 A"/>
    <property type="chains" value="E6=1-125"/>
</dbReference>
<dbReference type="PDB" id="7L08">
    <property type="method" value="EM"/>
    <property type="resolution" value="3.49 A"/>
    <property type="chains" value="AE=1-125"/>
</dbReference>
<dbReference type="PDB" id="7OG4">
    <property type="method" value="EM"/>
    <property type="resolution" value="3.80 A"/>
    <property type="chains" value="AE=1-125"/>
</dbReference>
<dbReference type="PDB" id="7P2E">
    <property type="method" value="EM"/>
    <property type="resolution" value="2.40 A"/>
    <property type="chains" value="E=1-125"/>
</dbReference>
<dbReference type="PDB" id="7PNX">
    <property type="method" value="EM"/>
    <property type="resolution" value="2.76 A"/>
    <property type="chains" value="E=1-125"/>
</dbReference>
<dbReference type="PDB" id="7PNY">
    <property type="method" value="EM"/>
    <property type="resolution" value="3.06 A"/>
    <property type="chains" value="E=1-125"/>
</dbReference>
<dbReference type="PDB" id="7PNZ">
    <property type="method" value="EM"/>
    <property type="resolution" value="3.09 A"/>
    <property type="chains" value="E=1-125"/>
</dbReference>
<dbReference type="PDB" id="7PO0">
    <property type="method" value="EM"/>
    <property type="resolution" value="2.90 A"/>
    <property type="chains" value="E=1-125"/>
</dbReference>
<dbReference type="PDB" id="7PO1">
    <property type="method" value="EM"/>
    <property type="resolution" value="2.92 A"/>
    <property type="chains" value="E=1-125"/>
</dbReference>
<dbReference type="PDB" id="7PO2">
    <property type="method" value="EM"/>
    <property type="resolution" value="3.09 A"/>
    <property type="chains" value="E=1-125"/>
</dbReference>
<dbReference type="PDB" id="7PO3">
    <property type="method" value="EM"/>
    <property type="resolution" value="2.92 A"/>
    <property type="chains" value="E=1-125"/>
</dbReference>
<dbReference type="PDB" id="7QI4">
    <property type="method" value="EM"/>
    <property type="resolution" value="2.21 A"/>
    <property type="chains" value="AE=1-125"/>
</dbReference>
<dbReference type="PDB" id="7QI5">
    <property type="method" value="EM"/>
    <property type="resolution" value="2.63 A"/>
    <property type="chains" value="AE=1-125"/>
</dbReference>
<dbReference type="PDB" id="7QI6">
    <property type="method" value="EM"/>
    <property type="resolution" value="2.98 A"/>
    <property type="chains" value="AE=1-125"/>
</dbReference>
<dbReference type="PDB" id="8ANY">
    <property type="method" value="EM"/>
    <property type="resolution" value="2.85 A"/>
    <property type="chains" value="AE=1-125"/>
</dbReference>
<dbReference type="PDB" id="8CSP">
    <property type="method" value="EM"/>
    <property type="resolution" value="2.66 A"/>
    <property type="chains" value="E=1-125"/>
</dbReference>
<dbReference type="PDB" id="8CSQ">
    <property type="method" value="EM"/>
    <property type="resolution" value="2.54 A"/>
    <property type="chains" value="E=1-125"/>
</dbReference>
<dbReference type="PDB" id="8CSR">
    <property type="method" value="EM"/>
    <property type="resolution" value="2.54 A"/>
    <property type="chains" value="E=1-125"/>
</dbReference>
<dbReference type="PDB" id="8CSS">
    <property type="method" value="EM"/>
    <property type="resolution" value="2.36 A"/>
    <property type="chains" value="E=1-125"/>
</dbReference>
<dbReference type="PDB" id="8CST">
    <property type="method" value="EM"/>
    <property type="resolution" value="2.85 A"/>
    <property type="chains" value="E=1-125"/>
</dbReference>
<dbReference type="PDB" id="8CSU">
    <property type="method" value="EM"/>
    <property type="resolution" value="3.03 A"/>
    <property type="chains" value="E=1-125"/>
</dbReference>
<dbReference type="PDB" id="8K2A">
    <property type="method" value="EM"/>
    <property type="resolution" value="2.90 A"/>
    <property type="chains" value="SF=1-125"/>
</dbReference>
<dbReference type="PDB" id="8OIR">
    <property type="method" value="EM"/>
    <property type="resolution" value="3.10 A"/>
    <property type="chains" value="AE=1-125"/>
</dbReference>
<dbReference type="PDB" id="8OIS">
    <property type="method" value="EM"/>
    <property type="resolution" value="3.00 A"/>
    <property type="chains" value="AE=1-125"/>
</dbReference>
<dbReference type="PDB" id="8QRK">
    <property type="method" value="EM"/>
    <property type="resolution" value="6.69 A"/>
    <property type="chains" value="E=1-125"/>
</dbReference>
<dbReference type="PDB" id="8QRL">
    <property type="method" value="EM"/>
    <property type="resolution" value="3.34 A"/>
    <property type="chains" value="E=1-125"/>
</dbReference>
<dbReference type="PDB" id="8QRM">
    <property type="method" value="EM"/>
    <property type="resolution" value="3.05 A"/>
    <property type="chains" value="E=1-125"/>
</dbReference>
<dbReference type="PDB" id="8QRN">
    <property type="method" value="EM"/>
    <property type="resolution" value="2.98 A"/>
    <property type="chains" value="E=1-125"/>
</dbReference>
<dbReference type="PDB" id="8RRI">
    <property type="method" value="EM"/>
    <property type="resolution" value="2.40 A"/>
    <property type="chains" value="AE=1-125"/>
</dbReference>
<dbReference type="PDB" id="8XT0">
    <property type="method" value="EM"/>
    <property type="resolution" value="3.20 A"/>
    <property type="chains" value="SF=1-125"/>
</dbReference>
<dbReference type="PDB" id="8XT2">
    <property type="method" value="EM"/>
    <property type="resolution" value="3.30 A"/>
    <property type="chains" value="SF=1-125"/>
</dbReference>
<dbReference type="PDBsum" id="3J9M"/>
<dbReference type="PDBsum" id="6NU2"/>
<dbReference type="PDBsum" id="6NU3"/>
<dbReference type="PDBsum" id="6RW4"/>
<dbReference type="PDBsum" id="6RW5"/>
<dbReference type="PDBsum" id="6VLZ"/>
<dbReference type="PDBsum" id="6VMI"/>
<dbReference type="PDBsum" id="6ZM5"/>
<dbReference type="PDBsum" id="6ZM6"/>
<dbReference type="PDBsum" id="6ZS9"/>
<dbReference type="PDBsum" id="6ZSA"/>
<dbReference type="PDBsum" id="6ZSB"/>
<dbReference type="PDBsum" id="6ZSC"/>
<dbReference type="PDBsum" id="6ZSD"/>
<dbReference type="PDBsum" id="6ZSE"/>
<dbReference type="PDBsum" id="6ZSG"/>
<dbReference type="PDBsum" id="7A5F"/>
<dbReference type="PDBsum" id="7A5G"/>
<dbReference type="PDBsum" id="7A5I"/>
<dbReference type="PDBsum" id="7A5K"/>
<dbReference type="PDBsum" id="7L08"/>
<dbReference type="PDBsum" id="7OG4"/>
<dbReference type="PDBsum" id="7P2E"/>
<dbReference type="PDBsum" id="7PNX"/>
<dbReference type="PDBsum" id="7PNY"/>
<dbReference type="PDBsum" id="7PNZ"/>
<dbReference type="PDBsum" id="7PO0"/>
<dbReference type="PDBsum" id="7PO1"/>
<dbReference type="PDBsum" id="7PO2"/>
<dbReference type="PDBsum" id="7PO3"/>
<dbReference type="PDBsum" id="7QI4"/>
<dbReference type="PDBsum" id="7QI5"/>
<dbReference type="PDBsum" id="7QI6"/>
<dbReference type="PDBsum" id="8ANY"/>
<dbReference type="PDBsum" id="8CSP"/>
<dbReference type="PDBsum" id="8CSQ"/>
<dbReference type="PDBsum" id="8CSR"/>
<dbReference type="PDBsum" id="8CSS"/>
<dbReference type="PDBsum" id="8CST"/>
<dbReference type="PDBsum" id="8CSU"/>
<dbReference type="PDBsum" id="8K2A"/>
<dbReference type="PDBsum" id="8OIR"/>
<dbReference type="PDBsum" id="8OIS"/>
<dbReference type="PDBsum" id="8QRK"/>
<dbReference type="PDBsum" id="8QRL"/>
<dbReference type="PDBsum" id="8QRM"/>
<dbReference type="PDBsum" id="8QRN"/>
<dbReference type="PDBsum" id="8RRI"/>
<dbReference type="PDBsum" id="8XT0"/>
<dbReference type="PDBsum" id="8XT2"/>
<dbReference type="EMDB" id="EMD-0514"/>
<dbReference type="EMDB" id="EMD-0515"/>
<dbReference type="EMDB" id="EMD-10021"/>
<dbReference type="EMDB" id="EMD-10022"/>
<dbReference type="EMDB" id="EMD-11278"/>
<dbReference type="EMDB" id="EMD-11279"/>
<dbReference type="EMDB" id="EMD-11390"/>
<dbReference type="EMDB" id="EMD-11391"/>
<dbReference type="EMDB" id="EMD-11392"/>
<dbReference type="EMDB" id="EMD-11393"/>
<dbReference type="EMDB" id="EMD-11394"/>
<dbReference type="EMDB" id="EMD-11395"/>
<dbReference type="EMDB" id="EMD-11397"/>
<dbReference type="EMDB" id="EMD-11641"/>
<dbReference type="EMDB" id="EMD-11642"/>
<dbReference type="EMDB" id="EMD-11644"/>
<dbReference type="EMDB" id="EMD-11646"/>
<dbReference type="EMDB" id="EMD-12877"/>
<dbReference type="EMDB" id="EMD-13170"/>
<dbReference type="EMDB" id="EMD-13555"/>
<dbReference type="EMDB" id="EMD-13556"/>
<dbReference type="EMDB" id="EMD-13557"/>
<dbReference type="EMDB" id="EMD-13558"/>
<dbReference type="EMDB" id="EMD-13559"/>
<dbReference type="EMDB" id="EMD-13560"/>
<dbReference type="EMDB" id="EMD-13561"/>
<dbReference type="EMDB" id="EMD-13980"/>
<dbReference type="EMDB" id="EMD-13981"/>
<dbReference type="EMDB" id="EMD-13982"/>
<dbReference type="EMDB" id="EMD-15544"/>
<dbReference type="EMDB" id="EMD-16897"/>
<dbReference type="EMDB" id="EMD-16898"/>
<dbReference type="EMDB" id="EMD-19460"/>
<dbReference type="EMDB" id="EMD-21233"/>
<dbReference type="EMDB" id="EMD-21242"/>
<dbReference type="EMDB" id="EMD-23096"/>
<dbReference type="EMDB" id="EMD-26966"/>
<dbReference type="EMDB" id="EMD-26967"/>
<dbReference type="EMDB" id="EMD-26968"/>
<dbReference type="EMDB" id="EMD-26969"/>
<dbReference type="EMDB" id="EMD-26970"/>
<dbReference type="EMDB" id="EMD-26971"/>
<dbReference type="EMDB" id="EMD-36836"/>
<dbReference type="EMDB" id="EMD-38632"/>
<dbReference type="EMDB" id="EMD-38634"/>
<dbReference type="SMR" id="P82932"/>
<dbReference type="BioGRID" id="122361">
    <property type="interactions" value="177"/>
</dbReference>
<dbReference type="ComplexPortal" id="CPX-5225">
    <property type="entry name" value="28S mitochondrial small ribosomal subunit"/>
</dbReference>
<dbReference type="CORUM" id="P82932"/>
<dbReference type="FunCoup" id="P82932">
    <property type="interactions" value="1184"/>
</dbReference>
<dbReference type="IntAct" id="P82932">
    <property type="interactions" value="94"/>
</dbReference>
<dbReference type="MINT" id="P82932"/>
<dbReference type="STRING" id="9606.ENSP00000382250"/>
<dbReference type="GlyGen" id="P82932">
    <property type="glycosylation" value="1 site, 1 O-linked glycan (1 site)"/>
</dbReference>
<dbReference type="iPTMnet" id="P82932"/>
<dbReference type="MetOSite" id="P82932"/>
<dbReference type="PhosphoSitePlus" id="P82932"/>
<dbReference type="BioMuta" id="MRPS6"/>
<dbReference type="DMDM" id="13959558"/>
<dbReference type="jPOST" id="P82932"/>
<dbReference type="MassIVE" id="P82932"/>
<dbReference type="PaxDb" id="9606-ENSP00000382250"/>
<dbReference type="PeptideAtlas" id="P82932"/>
<dbReference type="ProteomicsDB" id="57723"/>
<dbReference type="Pumba" id="P82932"/>
<dbReference type="TopDownProteomics" id="P82932"/>
<dbReference type="Antibodypedia" id="35213">
    <property type="antibodies" value="65 antibodies from 17 providers"/>
</dbReference>
<dbReference type="DNASU" id="64968"/>
<dbReference type="Ensembl" id="ENST00000399312.3">
    <property type="protein sequence ID" value="ENSP00000382250.2"/>
    <property type="gene ID" value="ENSG00000243927.7"/>
</dbReference>
<dbReference type="GeneID" id="64968"/>
<dbReference type="KEGG" id="hsa:64968"/>
<dbReference type="MANE-Select" id="ENST00000399312.3">
    <property type="protein sequence ID" value="ENSP00000382250.2"/>
    <property type="RefSeq nucleotide sequence ID" value="NM_032476.4"/>
    <property type="RefSeq protein sequence ID" value="NP_115865.1"/>
</dbReference>
<dbReference type="UCSC" id="uc002ytp.2">
    <property type="organism name" value="human"/>
</dbReference>
<dbReference type="AGR" id="HGNC:14051"/>
<dbReference type="CTD" id="64968"/>
<dbReference type="DisGeNET" id="64968"/>
<dbReference type="GeneCards" id="MRPS6"/>
<dbReference type="HGNC" id="HGNC:14051">
    <property type="gene designation" value="MRPS6"/>
</dbReference>
<dbReference type="HPA" id="ENSG00000243927">
    <property type="expression patterns" value="Tissue enhanced (choroid plexus, kidney)"/>
</dbReference>
<dbReference type="MIM" id="611973">
    <property type="type" value="gene"/>
</dbReference>
<dbReference type="neXtProt" id="NX_P82932"/>
<dbReference type="OpenTargets" id="ENSG00000243927"/>
<dbReference type="PharmGKB" id="PA31025"/>
<dbReference type="VEuPathDB" id="HostDB:ENSG00000243927"/>
<dbReference type="eggNOG" id="KOG4708">
    <property type="taxonomic scope" value="Eukaryota"/>
</dbReference>
<dbReference type="GeneTree" id="ENSGT00390000014606"/>
<dbReference type="HOGENOM" id="CLU_126331_4_2_1"/>
<dbReference type="InParanoid" id="P82932"/>
<dbReference type="OMA" id="ATHFTIT"/>
<dbReference type="OrthoDB" id="268530at2759"/>
<dbReference type="PAN-GO" id="P82932">
    <property type="GO annotations" value="3 GO annotations based on evolutionary models"/>
</dbReference>
<dbReference type="PhylomeDB" id="P82932"/>
<dbReference type="TreeFam" id="TF314045"/>
<dbReference type="PathwayCommons" id="P82932"/>
<dbReference type="Reactome" id="R-HSA-5368286">
    <property type="pathway name" value="Mitochondrial translation initiation"/>
</dbReference>
<dbReference type="Reactome" id="R-HSA-5389840">
    <property type="pathway name" value="Mitochondrial translation elongation"/>
</dbReference>
<dbReference type="Reactome" id="R-HSA-5419276">
    <property type="pathway name" value="Mitochondrial translation termination"/>
</dbReference>
<dbReference type="SignaLink" id="P82932"/>
<dbReference type="SIGNOR" id="P82932"/>
<dbReference type="BioGRID-ORCS" id="64968">
    <property type="hits" value="456 hits in 1158 CRISPR screens"/>
</dbReference>
<dbReference type="ChiTaRS" id="MRPS6">
    <property type="organism name" value="human"/>
</dbReference>
<dbReference type="GeneWiki" id="MRPS6"/>
<dbReference type="GenomeRNAi" id="64968"/>
<dbReference type="Pharos" id="P82932">
    <property type="development level" value="Tbio"/>
</dbReference>
<dbReference type="PRO" id="PR:P82932"/>
<dbReference type="Proteomes" id="UP000005640">
    <property type="component" value="Chromosome 21"/>
</dbReference>
<dbReference type="RNAct" id="P82932">
    <property type="molecule type" value="protein"/>
</dbReference>
<dbReference type="Bgee" id="ENSG00000243927">
    <property type="expression patterns" value="Expressed in renal medulla and 185 other cell types or tissues"/>
</dbReference>
<dbReference type="GO" id="GO:0005743">
    <property type="term" value="C:mitochondrial inner membrane"/>
    <property type="evidence" value="ECO:0000304"/>
    <property type="project" value="Reactome"/>
</dbReference>
<dbReference type="GO" id="GO:0005763">
    <property type="term" value="C:mitochondrial small ribosomal subunit"/>
    <property type="evidence" value="ECO:0000314"/>
    <property type="project" value="UniProtKB"/>
</dbReference>
<dbReference type="GO" id="GO:0005739">
    <property type="term" value="C:mitochondrion"/>
    <property type="evidence" value="ECO:0000314"/>
    <property type="project" value="HPA"/>
</dbReference>
<dbReference type="GO" id="GO:0015935">
    <property type="term" value="C:small ribosomal subunit"/>
    <property type="evidence" value="ECO:0000303"/>
    <property type="project" value="UniProtKB"/>
</dbReference>
<dbReference type="GO" id="GO:0070181">
    <property type="term" value="F:small ribosomal subunit rRNA binding"/>
    <property type="evidence" value="ECO:0000318"/>
    <property type="project" value="GO_Central"/>
</dbReference>
<dbReference type="GO" id="GO:0003735">
    <property type="term" value="F:structural constituent of ribosome"/>
    <property type="evidence" value="ECO:0000250"/>
    <property type="project" value="UniProtKB"/>
</dbReference>
<dbReference type="GO" id="GO:0032543">
    <property type="term" value="P:mitochondrial translation"/>
    <property type="evidence" value="ECO:0000250"/>
    <property type="project" value="UniProtKB"/>
</dbReference>
<dbReference type="GO" id="GO:0006412">
    <property type="term" value="P:translation"/>
    <property type="evidence" value="ECO:0000303"/>
    <property type="project" value="UniProtKB"/>
</dbReference>
<dbReference type="CDD" id="cd15465">
    <property type="entry name" value="bS6_mito"/>
    <property type="match status" value="1"/>
</dbReference>
<dbReference type="FunFam" id="3.30.70.60:FF:000008">
    <property type="entry name" value="28S ribosomal protein S6, mitochondrial"/>
    <property type="match status" value="1"/>
</dbReference>
<dbReference type="Gene3D" id="3.30.70.60">
    <property type="match status" value="1"/>
</dbReference>
<dbReference type="InterPro" id="IPR000529">
    <property type="entry name" value="Ribosomal_bS6"/>
</dbReference>
<dbReference type="InterPro" id="IPR035980">
    <property type="entry name" value="Ribosomal_bS6_sf"/>
</dbReference>
<dbReference type="InterPro" id="IPR014717">
    <property type="entry name" value="Transl_elong_EF1B/ribsomal_bS6"/>
</dbReference>
<dbReference type="NCBIfam" id="TIGR00166">
    <property type="entry name" value="S6"/>
    <property type="match status" value="1"/>
</dbReference>
<dbReference type="PANTHER" id="PTHR21011">
    <property type="entry name" value="MITOCHONDRIAL 28S RIBOSOMAL PROTEIN S6"/>
    <property type="match status" value="1"/>
</dbReference>
<dbReference type="PANTHER" id="PTHR21011:SF1">
    <property type="entry name" value="SMALL RIBOSOMAL SUBUNIT PROTEIN BS6M"/>
    <property type="match status" value="1"/>
</dbReference>
<dbReference type="Pfam" id="PF01250">
    <property type="entry name" value="Ribosomal_S6"/>
    <property type="match status" value="1"/>
</dbReference>
<dbReference type="SUPFAM" id="SSF54995">
    <property type="entry name" value="Ribosomal protein S6"/>
    <property type="match status" value="1"/>
</dbReference>
<reference key="1">
    <citation type="journal article" date="2001" name="J. Biol. Chem.">
        <title>Proteomic analysis of the mammalian mitochondrial ribosome. Identification of protein components in the 28S small subunit.</title>
        <authorList>
            <person name="Suzuki T."/>
            <person name="Terasaki M."/>
            <person name="Takemoto-Hori C."/>
            <person name="Hanada T."/>
            <person name="Ueda T."/>
            <person name="Wada A."/>
            <person name="Watanabe K."/>
        </authorList>
    </citation>
    <scope>NUCLEOTIDE SEQUENCE [MRNA]</scope>
</reference>
<reference key="2">
    <citation type="journal article" date="2002" name="Genomics">
        <title>Nineteen additional unpredicted transcripts from human chromosome 21.</title>
        <authorList>
            <person name="Reymond A."/>
            <person name="Camargo A.A."/>
            <person name="Deutsch S."/>
            <person name="Stevenson B.J."/>
            <person name="Parmigiani R.B."/>
            <person name="Ucla C."/>
            <person name="Bettoni F."/>
            <person name="Rossier C."/>
            <person name="Lyle R."/>
            <person name="Guipponi M."/>
            <person name="de Souza S."/>
            <person name="Iseli C."/>
            <person name="Jongeneel C.V."/>
            <person name="Bucher P."/>
            <person name="Simpson A.J.G."/>
            <person name="Antonarakis S.E."/>
        </authorList>
    </citation>
    <scope>NUCLEOTIDE SEQUENCE [MRNA]</scope>
</reference>
<reference key="3">
    <citation type="journal article" date="2004" name="Nat. Genet.">
        <title>Complete sequencing and characterization of 21,243 full-length human cDNAs.</title>
        <authorList>
            <person name="Ota T."/>
            <person name="Suzuki Y."/>
            <person name="Nishikawa T."/>
            <person name="Otsuki T."/>
            <person name="Sugiyama T."/>
            <person name="Irie R."/>
            <person name="Wakamatsu A."/>
            <person name="Hayashi K."/>
            <person name="Sato H."/>
            <person name="Nagai K."/>
            <person name="Kimura K."/>
            <person name="Makita H."/>
            <person name="Sekine M."/>
            <person name="Obayashi M."/>
            <person name="Nishi T."/>
            <person name="Shibahara T."/>
            <person name="Tanaka T."/>
            <person name="Ishii S."/>
            <person name="Yamamoto J."/>
            <person name="Saito K."/>
            <person name="Kawai Y."/>
            <person name="Isono Y."/>
            <person name="Nakamura Y."/>
            <person name="Nagahari K."/>
            <person name="Murakami K."/>
            <person name="Yasuda T."/>
            <person name="Iwayanagi T."/>
            <person name="Wagatsuma M."/>
            <person name="Shiratori A."/>
            <person name="Sudo H."/>
            <person name="Hosoiri T."/>
            <person name="Kaku Y."/>
            <person name="Kodaira H."/>
            <person name="Kondo H."/>
            <person name="Sugawara M."/>
            <person name="Takahashi M."/>
            <person name="Kanda K."/>
            <person name="Yokoi T."/>
            <person name="Furuya T."/>
            <person name="Kikkawa E."/>
            <person name="Omura Y."/>
            <person name="Abe K."/>
            <person name="Kamihara K."/>
            <person name="Katsuta N."/>
            <person name="Sato K."/>
            <person name="Tanikawa M."/>
            <person name="Yamazaki M."/>
            <person name="Ninomiya K."/>
            <person name="Ishibashi T."/>
            <person name="Yamashita H."/>
            <person name="Murakawa K."/>
            <person name="Fujimori K."/>
            <person name="Tanai H."/>
            <person name="Kimata M."/>
            <person name="Watanabe M."/>
            <person name="Hiraoka S."/>
            <person name="Chiba Y."/>
            <person name="Ishida S."/>
            <person name="Ono Y."/>
            <person name="Takiguchi S."/>
            <person name="Watanabe S."/>
            <person name="Yosida M."/>
            <person name="Hotuta T."/>
            <person name="Kusano J."/>
            <person name="Kanehori K."/>
            <person name="Takahashi-Fujii A."/>
            <person name="Hara H."/>
            <person name="Tanase T.-O."/>
            <person name="Nomura Y."/>
            <person name="Togiya S."/>
            <person name="Komai F."/>
            <person name="Hara R."/>
            <person name="Takeuchi K."/>
            <person name="Arita M."/>
            <person name="Imose N."/>
            <person name="Musashino K."/>
            <person name="Yuuki H."/>
            <person name="Oshima A."/>
            <person name="Sasaki N."/>
            <person name="Aotsuka S."/>
            <person name="Yoshikawa Y."/>
            <person name="Matsunawa H."/>
            <person name="Ichihara T."/>
            <person name="Shiohata N."/>
            <person name="Sano S."/>
            <person name="Moriya S."/>
            <person name="Momiyama H."/>
            <person name="Satoh N."/>
            <person name="Takami S."/>
            <person name="Terashima Y."/>
            <person name="Suzuki O."/>
            <person name="Nakagawa S."/>
            <person name="Senoh A."/>
            <person name="Mizoguchi H."/>
            <person name="Goto Y."/>
            <person name="Shimizu F."/>
            <person name="Wakebe H."/>
            <person name="Hishigaki H."/>
            <person name="Watanabe T."/>
            <person name="Sugiyama A."/>
            <person name="Takemoto M."/>
            <person name="Kawakami B."/>
            <person name="Yamazaki M."/>
            <person name="Watanabe K."/>
            <person name="Kumagai A."/>
            <person name="Itakura S."/>
            <person name="Fukuzumi Y."/>
            <person name="Fujimori Y."/>
            <person name="Komiyama M."/>
            <person name="Tashiro H."/>
            <person name="Tanigami A."/>
            <person name="Fujiwara T."/>
            <person name="Ono T."/>
            <person name="Yamada K."/>
            <person name="Fujii Y."/>
            <person name="Ozaki K."/>
            <person name="Hirao M."/>
            <person name="Ohmori Y."/>
            <person name="Kawabata A."/>
            <person name="Hikiji T."/>
            <person name="Kobatake N."/>
            <person name="Inagaki H."/>
            <person name="Ikema Y."/>
            <person name="Okamoto S."/>
            <person name="Okitani R."/>
            <person name="Kawakami T."/>
            <person name="Noguchi S."/>
            <person name="Itoh T."/>
            <person name="Shigeta K."/>
            <person name="Senba T."/>
            <person name="Matsumura K."/>
            <person name="Nakajima Y."/>
            <person name="Mizuno T."/>
            <person name="Morinaga M."/>
            <person name="Sasaki M."/>
            <person name="Togashi T."/>
            <person name="Oyama M."/>
            <person name="Hata H."/>
            <person name="Watanabe M."/>
            <person name="Komatsu T."/>
            <person name="Mizushima-Sugano J."/>
            <person name="Satoh T."/>
            <person name="Shirai Y."/>
            <person name="Takahashi Y."/>
            <person name="Nakagawa K."/>
            <person name="Okumura K."/>
            <person name="Nagase T."/>
            <person name="Nomura N."/>
            <person name="Kikuchi H."/>
            <person name="Masuho Y."/>
            <person name="Yamashita R."/>
            <person name="Nakai K."/>
            <person name="Yada T."/>
            <person name="Nakamura Y."/>
            <person name="Ohara O."/>
            <person name="Isogai T."/>
            <person name="Sugano S."/>
        </authorList>
    </citation>
    <scope>NUCLEOTIDE SEQUENCE [LARGE SCALE MRNA]</scope>
</reference>
<reference key="4">
    <citation type="journal article" date="2000" name="Nature">
        <title>The DNA sequence of human chromosome 21.</title>
        <authorList>
            <person name="Hattori M."/>
            <person name="Fujiyama A."/>
            <person name="Taylor T.D."/>
            <person name="Watanabe H."/>
            <person name="Yada T."/>
            <person name="Park H.-S."/>
            <person name="Toyoda A."/>
            <person name="Ishii K."/>
            <person name="Totoki Y."/>
            <person name="Choi D.-K."/>
            <person name="Groner Y."/>
            <person name="Soeda E."/>
            <person name="Ohki M."/>
            <person name="Takagi T."/>
            <person name="Sakaki Y."/>
            <person name="Taudien S."/>
            <person name="Blechschmidt K."/>
            <person name="Polley A."/>
            <person name="Menzel U."/>
            <person name="Delabar J."/>
            <person name="Kumpf K."/>
            <person name="Lehmann R."/>
            <person name="Patterson D."/>
            <person name="Reichwald K."/>
            <person name="Rump A."/>
            <person name="Schillhabel M."/>
            <person name="Schudy A."/>
            <person name="Zimmermann W."/>
            <person name="Rosenthal A."/>
            <person name="Kudoh J."/>
            <person name="Shibuya K."/>
            <person name="Kawasaki K."/>
            <person name="Asakawa S."/>
            <person name="Shintani A."/>
            <person name="Sasaki T."/>
            <person name="Nagamine K."/>
            <person name="Mitsuyama S."/>
            <person name="Antonarakis S.E."/>
            <person name="Minoshima S."/>
            <person name="Shimizu N."/>
            <person name="Nordsiek G."/>
            <person name="Hornischer K."/>
            <person name="Brandt P."/>
            <person name="Scharfe M."/>
            <person name="Schoen O."/>
            <person name="Desario A."/>
            <person name="Reichelt J."/>
            <person name="Kauer G."/>
            <person name="Bloecker H."/>
            <person name="Ramser J."/>
            <person name="Beck A."/>
            <person name="Klages S."/>
            <person name="Hennig S."/>
            <person name="Riesselmann L."/>
            <person name="Dagand E."/>
            <person name="Wehrmeyer S."/>
            <person name="Borzym K."/>
            <person name="Gardiner K."/>
            <person name="Nizetic D."/>
            <person name="Francis F."/>
            <person name="Lehrach H."/>
            <person name="Reinhardt R."/>
            <person name="Yaspo M.-L."/>
        </authorList>
    </citation>
    <scope>NUCLEOTIDE SEQUENCE [LARGE SCALE GENOMIC DNA]</scope>
</reference>
<reference key="5">
    <citation type="submission" date="2005-09" db="EMBL/GenBank/DDBJ databases">
        <authorList>
            <person name="Mural R.J."/>
            <person name="Istrail S."/>
            <person name="Sutton G.G."/>
            <person name="Florea L."/>
            <person name="Halpern A.L."/>
            <person name="Mobarry C.M."/>
            <person name="Lippert R."/>
            <person name="Walenz B."/>
            <person name="Shatkay H."/>
            <person name="Dew I."/>
            <person name="Miller J.R."/>
            <person name="Flanigan M.J."/>
            <person name="Edwards N.J."/>
            <person name="Bolanos R."/>
            <person name="Fasulo D."/>
            <person name="Halldorsson B.V."/>
            <person name="Hannenhalli S."/>
            <person name="Turner R."/>
            <person name="Yooseph S."/>
            <person name="Lu F."/>
            <person name="Nusskern D.R."/>
            <person name="Shue B.C."/>
            <person name="Zheng X.H."/>
            <person name="Zhong F."/>
            <person name="Delcher A.L."/>
            <person name="Huson D.H."/>
            <person name="Kravitz S.A."/>
            <person name="Mouchard L."/>
            <person name="Reinert K."/>
            <person name="Remington K.A."/>
            <person name="Clark A.G."/>
            <person name="Waterman M.S."/>
            <person name="Eichler E.E."/>
            <person name="Adams M.D."/>
            <person name="Hunkapiller M.W."/>
            <person name="Myers E.W."/>
            <person name="Venter J.C."/>
        </authorList>
    </citation>
    <scope>NUCLEOTIDE SEQUENCE [LARGE SCALE GENOMIC DNA]</scope>
</reference>
<reference key="6">
    <citation type="journal article" date="2004" name="Genome Res.">
        <title>The status, quality, and expansion of the NIH full-length cDNA project: the Mammalian Gene Collection (MGC).</title>
        <authorList>
            <consortium name="The MGC Project Team"/>
        </authorList>
    </citation>
    <scope>NUCLEOTIDE SEQUENCE [LARGE SCALE MRNA]</scope>
    <source>
        <tissue>B-cell</tissue>
        <tissue>Brain</tissue>
        <tissue>Kidney</tissue>
        <tissue>Uterus</tissue>
    </source>
</reference>
<reference key="7">
    <citation type="journal article" date="2001" name="Genomics">
        <title>The human mitochondrial ribosomal protein genes: mapping of 54 genes to the chromosomes and implications for human disorders.</title>
        <authorList>
            <person name="Kenmochi N."/>
            <person name="Suzuki T."/>
            <person name="Uechi T."/>
            <person name="Magoori M."/>
            <person name="Kuniba M."/>
            <person name="Higa S."/>
            <person name="Watanabe K."/>
            <person name="Tanaka T."/>
        </authorList>
    </citation>
    <scope>NUCLEOTIDE SEQUENCE OF 28-62</scope>
</reference>
<reference key="8">
    <citation type="journal article" date="2001" name="J. Biol. Chem.">
        <title>The small subunit of the mammalian mitochondrial ribosome: identification of the full complement of ribosomal proteins present.</title>
        <authorList>
            <person name="Koc E.C."/>
            <person name="Burkhart W."/>
            <person name="Blackburn K."/>
            <person name="Moseley A."/>
            <person name="Spremulli L.L."/>
        </authorList>
    </citation>
    <scope>IDENTIFICATION</scope>
</reference>
<reference key="9">
    <citation type="journal article" date="2011" name="BMC Syst. Biol.">
        <title>Initial characterization of the human central proteome.</title>
        <authorList>
            <person name="Burkard T.R."/>
            <person name="Planyavsky M."/>
            <person name="Kaupe I."/>
            <person name="Breitwieser F.P."/>
            <person name="Buerckstuemmer T."/>
            <person name="Bennett K.L."/>
            <person name="Superti-Furga G."/>
            <person name="Colinge J."/>
        </authorList>
    </citation>
    <scope>IDENTIFICATION BY MASS SPECTROMETRY [LARGE SCALE ANALYSIS]</scope>
</reference>
<reference key="10">
    <citation type="journal article" date="2015" name="Proteomics">
        <title>N-terminome analysis of the human mitochondrial proteome.</title>
        <authorList>
            <person name="Vaca Jacome A.S."/>
            <person name="Rabilloud T."/>
            <person name="Schaeffer-Reiss C."/>
            <person name="Rompais M."/>
            <person name="Ayoub D."/>
            <person name="Lane L."/>
            <person name="Bairoch A."/>
            <person name="Van Dorsselaer A."/>
            <person name="Carapito C."/>
        </authorList>
    </citation>
    <scope>IDENTIFICATION BY MASS SPECTROMETRY [LARGE SCALE ANALYSIS]</scope>
</reference>
<reference evidence="4" key="11">
    <citation type="journal article" date="2015" name="Science">
        <title>Ribosome. The structure of the human mitochondrial ribosome.</title>
        <authorList>
            <person name="Amunts A."/>
            <person name="Brown A."/>
            <person name="Toots J."/>
            <person name="Scheres S.H."/>
            <person name="Ramakrishnan V."/>
        </authorList>
    </citation>
    <scope>STRUCTURE BY ELECTRON MICROSCOPY (3.50 ANGSTROMS)</scope>
    <scope>SUBCELLULAR LOCATION</scope>
    <scope>SUBUNIT</scope>
</reference>